<dbReference type="EC" id="2.3.1.189" evidence="1"/>
<dbReference type="EMBL" id="CP001958">
    <property type="protein sequence ID" value="ADG99471.1"/>
    <property type="molecule type" value="Genomic_DNA"/>
</dbReference>
<dbReference type="RefSeq" id="WP_013139918.1">
    <property type="nucleotide sequence ID" value="NC_014168.1"/>
</dbReference>
<dbReference type="SMR" id="D6ZEJ5"/>
<dbReference type="STRING" id="640132.Srot_3047"/>
<dbReference type="KEGG" id="srt:Srot_3047"/>
<dbReference type="eggNOG" id="COG0456">
    <property type="taxonomic scope" value="Bacteria"/>
</dbReference>
<dbReference type="eggNOG" id="COG3153">
    <property type="taxonomic scope" value="Bacteria"/>
</dbReference>
<dbReference type="HOGENOM" id="CLU_068014_0_0_11"/>
<dbReference type="OrthoDB" id="3208058at2"/>
<dbReference type="Proteomes" id="UP000002247">
    <property type="component" value="Chromosome"/>
</dbReference>
<dbReference type="GO" id="GO:0035447">
    <property type="term" value="F:mycothiol synthase activity"/>
    <property type="evidence" value="ECO:0007669"/>
    <property type="project" value="UniProtKB-UniRule"/>
</dbReference>
<dbReference type="GO" id="GO:0010125">
    <property type="term" value="P:mycothiol biosynthetic process"/>
    <property type="evidence" value="ECO:0007669"/>
    <property type="project" value="UniProtKB-UniRule"/>
</dbReference>
<dbReference type="CDD" id="cd04301">
    <property type="entry name" value="NAT_SF"/>
    <property type="match status" value="2"/>
</dbReference>
<dbReference type="Gene3D" id="3.40.630.30">
    <property type="match status" value="1"/>
</dbReference>
<dbReference type="HAMAP" id="MF_01698">
    <property type="entry name" value="MshD"/>
    <property type="match status" value="1"/>
</dbReference>
<dbReference type="InterPro" id="IPR016181">
    <property type="entry name" value="Acyl_CoA_acyltransferase"/>
</dbReference>
<dbReference type="InterPro" id="IPR000182">
    <property type="entry name" value="GNAT_dom"/>
</dbReference>
<dbReference type="InterPro" id="IPR017813">
    <property type="entry name" value="Mycothiol_AcTrfase"/>
</dbReference>
<dbReference type="NCBIfam" id="TIGR03448">
    <property type="entry name" value="mycothiol_MshD"/>
    <property type="match status" value="1"/>
</dbReference>
<dbReference type="PANTHER" id="PTHR43072">
    <property type="entry name" value="N-ACETYLTRANSFERASE"/>
    <property type="match status" value="1"/>
</dbReference>
<dbReference type="Pfam" id="PF00583">
    <property type="entry name" value="Acetyltransf_1"/>
    <property type="match status" value="1"/>
</dbReference>
<dbReference type="PIRSF" id="PIRSF021524">
    <property type="entry name" value="MSH_acetyltransferase"/>
    <property type="match status" value="1"/>
</dbReference>
<dbReference type="SUPFAM" id="SSF55729">
    <property type="entry name" value="Acyl-CoA N-acyltransferases (Nat)"/>
    <property type="match status" value="1"/>
</dbReference>
<dbReference type="PROSITE" id="PS51186">
    <property type="entry name" value="GNAT"/>
    <property type="match status" value="2"/>
</dbReference>
<proteinExistence type="inferred from homology"/>
<evidence type="ECO:0000255" key="1">
    <source>
        <dbReference type="HAMAP-Rule" id="MF_01698"/>
    </source>
</evidence>
<sequence length="265" mass="29499">MDDLVREELPNGTRRLFARDAQGGEAGFAVIEPGRPGQPAMVEVQVRPEHRSCGLGGRLVRAALDEAGPGAYLWDHENSPASQAIVRRNGLVPVRTLCQMRRWLAYPPLPEPVFPDGVSVRQYQGPQDDEELLRVNNAAFDWHPEQGGWSIEKLRERLAQPWVDPAGIFLARDEQDRLIGFHWTRTHPQTQTEHKLGEVYVLGVDPACHCKGLGKALTLVGLRHLRDQGLAQAKLYVEQTNAPALATYRGLGFTVHAQDVAYVRG</sequence>
<keyword id="KW-0012">Acyltransferase</keyword>
<keyword id="KW-1185">Reference proteome</keyword>
<keyword id="KW-0677">Repeat</keyword>
<keyword id="KW-0808">Transferase</keyword>
<name>MSHD_SEGRD</name>
<gene>
    <name evidence="1" type="primary">mshD</name>
    <name type="ordered locus">Srot_3047</name>
</gene>
<organism>
    <name type="scientific">Segniliparus rotundus (strain ATCC BAA-972 / CDC 1076 / CIP 108378 / DSM 44985 / JCM 13578)</name>
    <dbReference type="NCBI Taxonomy" id="640132"/>
    <lineage>
        <taxon>Bacteria</taxon>
        <taxon>Bacillati</taxon>
        <taxon>Actinomycetota</taxon>
        <taxon>Actinomycetes</taxon>
        <taxon>Mycobacteriales</taxon>
        <taxon>Segniliparaceae</taxon>
        <taxon>Segniliparus</taxon>
    </lineage>
</organism>
<protein>
    <recommendedName>
        <fullName evidence="1">Mycothiol acetyltransferase</fullName>
        <shortName evidence="1">MSH acetyltransferase</shortName>
        <ecNumber evidence="1">2.3.1.189</ecNumber>
    </recommendedName>
    <alternativeName>
        <fullName evidence="1">Mycothiol synthase</fullName>
    </alternativeName>
</protein>
<comment type="function">
    <text evidence="1">Catalyzes the transfer of acetyl from acetyl-CoA to desacetylmycothiol (Cys-GlcN-Ins) to form mycothiol.</text>
</comment>
<comment type="catalytic activity">
    <reaction evidence="1">
        <text>1D-myo-inositol 2-(L-cysteinylamino)-2-deoxy-alpha-D-glucopyranoside + acetyl-CoA = mycothiol + CoA + H(+)</text>
        <dbReference type="Rhea" id="RHEA:26172"/>
        <dbReference type="ChEBI" id="CHEBI:15378"/>
        <dbReference type="ChEBI" id="CHEBI:16768"/>
        <dbReference type="ChEBI" id="CHEBI:57287"/>
        <dbReference type="ChEBI" id="CHEBI:57288"/>
        <dbReference type="ChEBI" id="CHEBI:58887"/>
        <dbReference type="EC" id="2.3.1.189"/>
    </reaction>
</comment>
<comment type="subunit">
    <text evidence="1">Monomer.</text>
</comment>
<comment type="similarity">
    <text evidence="1">Belongs to the acetyltransferase family. MshD subfamily.</text>
</comment>
<feature type="chain" id="PRO_0000400299" description="Mycothiol acetyltransferase">
    <location>
        <begin position="1"/>
        <end position="265"/>
    </location>
</feature>
<feature type="domain" description="N-acetyltransferase 1" evidence="1">
    <location>
        <begin position="1"/>
        <end position="110"/>
    </location>
</feature>
<feature type="domain" description="N-acetyltransferase 2" evidence="1">
    <location>
        <begin position="118"/>
        <end position="265"/>
    </location>
</feature>
<feature type="binding site" evidence="1">
    <location>
        <position position="3"/>
    </location>
    <ligand>
        <name>1D-myo-inositol 2-(L-cysteinylamino)-2-deoxy-alpha-D-glucopyranoside</name>
        <dbReference type="ChEBI" id="CHEBI:58887"/>
    </ligand>
</feature>
<feature type="binding site" evidence="1">
    <location>
        <begin position="44"/>
        <end position="46"/>
    </location>
    <ligand>
        <name>acetyl-CoA</name>
        <dbReference type="ChEBI" id="CHEBI:57288"/>
        <label>1</label>
    </ligand>
</feature>
<feature type="binding site" evidence="1">
    <location>
        <position position="145"/>
    </location>
    <ligand>
        <name>1D-myo-inositol 2-(L-cysteinylamino)-2-deoxy-alpha-D-glucopyranoside</name>
        <dbReference type="ChEBI" id="CHEBI:58887"/>
    </ligand>
</feature>
<feature type="binding site" evidence="1">
    <location>
        <position position="185"/>
    </location>
    <ligand>
        <name>1D-myo-inositol 2-(L-cysteinylamino)-2-deoxy-alpha-D-glucopyranoside</name>
        <dbReference type="ChEBI" id="CHEBI:58887"/>
    </ligand>
</feature>
<feature type="binding site" evidence="1">
    <location>
        <position position="198"/>
    </location>
    <ligand>
        <name>1D-myo-inositol 2-(L-cysteinylamino)-2-deoxy-alpha-D-glucopyranoside</name>
        <dbReference type="ChEBI" id="CHEBI:58887"/>
    </ligand>
</feature>
<feature type="binding site" evidence="1">
    <location>
        <begin position="202"/>
        <end position="204"/>
    </location>
    <ligand>
        <name>acetyl-CoA</name>
        <dbReference type="ChEBI" id="CHEBI:57288"/>
        <label>2</label>
    </ligand>
</feature>
<feature type="binding site" evidence="1">
    <location>
        <begin position="209"/>
        <end position="215"/>
    </location>
    <ligand>
        <name>acetyl-CoA</name>
        <dbReference type="ChEBI" id="CHEBI:57288"/>
        <label>2</label>
    </ligand>
</feature>
<feature type="binding site" evidence="1">
    <location>
        <position position="236"/>
    </location>
    <ligand>
        <name>1D-myo-inositol 2-(L-cysteinylamino)-2-deoxy-alpha-D-glucopyranoside</name>
        <dbReference type="ChEBI" id="CHEBI:58887"/>
    </ligand>
</feature>
<reference key="1">
    <citation type="journal article" date="2010" name="Stand. Genomic Sci.">
        <title>Complete genome sequence of Segniliparus rotundus type strain (CDC 1076).</title>
        <authorList>
            <person name="Sikorski J."/>
            <person name="Lapidus A."/>
            <person name="Copeland A."/>
            <person name="Misra M."/>
            <person name="Glavina Del Rio T."/>
            <person name="Nolan M."/>
            <person name="Lucas S."/>
            <person name="Chen F."/>
            <person name="Tice H."/>
            <person name="Cheng J.F."/>
            <person name="Jando M."/>
            <person name="Schneider S."/>
            <person name="Bruce D."/>
            <person name="Goodwin L."/>
            <person name="Pitluck S."/>
            <person name="Liolios K."/>
            <person name="Mikhailova N."/>
            <person name="Pati A."/>
            <person name="Ivanova N."/>
            <person name="Mavromatis K."/>
            <person name="Chen A."/>
            <person name="Palaniappan K."/>
            <person name="Chertkov O."/>
            <person name="Land M."/>
            <person name="Hauser L."/>
            <person name="Chang Y.J."/>
            <person name="Jeffries C.D."/>
            <person name="Brettin T."/>
            <person name="Detter J.C."/>
            <person name="Han C."/>
            <person name="Rohde M."/>
            <person name="Goker M."/>
            <person name="Bristow J."/>
            <person name="Eisen J.A."/>
            <person name="Markowitz V."/>
            <person name="Hugenholtz P."/>
            <person name="Kyrpides N.C."/>
            <person name="Klenk H.P."/>
        </authorList>
    </citation>
    <scope>NUCLEOTIDE SEQUENCE [LARGE SCALE GENOMIC DNA]</scope>
    <source>
        <strain>ATCC BAA-972 / CDC 1076 / CIP 108378 / DSM 44985 / JCM 13578</strain>
    </source>
</reference>
<accession>D6ZEJ5</accession>